<feature type="chain" id="PRO_0000079881" description="2-dehydro-3-deoxygalactonokinase">
    <location>
        <begin position="1"/>
        <end position="292"/>
    </location>
</feature>
<protein>
    <recommendedName>
        <fullName>2-dehydro-3-deoxygalactonokinase</fullName>
        <ecNumber>2.7.1.58</ecNumber>
    </recommendedName>
    <alternativeName>
        <fullName>2-keto-3-deoxy-galactonokinase</fullName>
    </alternativeName>
    <alternativeName>
        <fullName>2-oxo-3-deoxygalactonate kinase</fullName>
    </alternativeName>
</protein>
<evidence type="ECO:0000269" key="1">
    <source>
    </source>
</evidence>
<evidence type="ECO:0000305" key="2"/>
<dbReference type="EC" id="2.7.1.58"/>
<dbReference type="EMBL" id="L10328">
    <property type="protein sequence ID" value="AAA62045.1"/>
    <property type="molecule type" value="Genomic_DNA"/>
</dbReference>
<dbReference type="EMBL" id="U00096">
    <property type="protein sequence ID" value="AAC76716.1"/>
    <property type="molecule type" value="Genomic_DNA"/>
</dbReference>
<dbReference type="EMBL" id="AP009048">
    <property type="protein sequence ID" value="BAE77600.1"/>
    <property type="molecule type" value="Genomic_DNA"/>
</dbReference>
<dbReference type="PIR" id="F65171">
    <property type="entry name" value="F65171"/>
</dbReference>
<dbReference type="RefSeq" id="NP_418148.1">
    <property type="nucleotide sequence ID" value="NC_000913.3"/>
</dbReference>
<dbReference type="RefSeq" id="WP_000127091.1">
    <property type="nucleotide sequence ID" value="NZ_SSZK01000035.1"/>
</dbReference>
<dbReference type="SMR" id="P31459"/>
<dbReference type="BioGRID" id="4263413">
    <property type="interactions" value="157"/>
</dbReference>
<dbReference type="FunCoup" id="P31459">
    <property type="interactions" value="127"/>
</dbReference>
<dbReference type="IntAct" id="P31459">
    <property type="interactions" value="3"/>
</dbReference>
<dbReference type="STRING" id="511145.b3693"/>
<dbReference type="PaxDb" id="511145-b3693"/>
<dbReference type="DNASU" id="948207"/>
<dbReference type="EnsemblBacteria" id="AAC76716">
    <property type="protein sequence ID" value="AAC76716"/>
    <property type="gene ID" value="b3693"/>
</dbReference>
<dbReference type="GeneID" id="948207"/>
<dbReference type="KEGG" id="ecj:JW3670"/>
<dbReference type="KEGG" id="eco:b3693"/>
<dbReference type="KEGG" id="ecoc:C3026_20025"/>
<dbReference type="PATRIC" id="fig|1411691.4.peg.3009"/>
<dbReference type="EchoBASE" id="EB1668"/>
<dbReference type="eggNOG" id="COG3734">
    <property type="taxonomic scope" value="Bacteria"/>
</dbReference>
<dbReference type="HOGENOM" id="CLU_058005_2_0_6"/>
<dbReference type="InParanoid" id="P31459"/>
<dbReference type="OMA" id="RNGWIEM"/>
<dbReference type="OrthoDB" id="256574at2"/>
<dbReference type="PhylomeDB" id="P31459"/>
<dbReference type="BioCyc" id="EcoCyc:DEHYDDEOXGALACTKIN-MONOMER"/>
<dbReference type="BioCyc" id="MetaCyc:DEHYDDEOXGALACTKIN-MONOMER"/>
<dbReference type="UniPathway" id="UPA00081">
    <property type="reaction ID" value="UER00519"/>
</dbReference>
<dbReference type="PRO" id="PR:P31459"/>
<dbReference type="Proteomes" id="UP000000625">
    <property type="component" value="Chromosome"/>
</dbReference>
<dbReference type="GO" id="GO:0008671">
    <property type="term" value="F:2-dehydro-3-deoxygalactonokinase activity"/>
    <property type="evidence" value="ECO:0000314"/>
    <property type="project" value="EcoCyc"/>
</dbReference>
<dbReference type="GO" id="GO:0005524">
    <property type="term" value="F:ATP binding"/>
    <property type="evidence" value="ECO:0007669"/>
    <property type="project" value="UniProtKB-KW"/>
</dbReference>
<dbReference type="GO" id="GO:0034194">
    <property type="term" value="P:D-galactonate catabolic process"/>
    <property type="evidence" value="ECO:0000315"/>
    <property type="project" value="EcoCyc"/>
</dbReference>
<dbReference type="CDD" id="cd24012">
    <property type="entry name" value="ASKHA_NBD_KDGal-kinase"/>
    <property type="match status" value="1"/>
</dbReference>
<dbReference type="FunFam" id="3.30.420.300:FF:000001">
    <property type="entry name" value="2-oxo-3-deoxygalactonate kinase"/>
    <property type="match status" value="1"/>
</dbReference>
<dbReference type="FunFam" id="3.30.420.310:FF:000001">
    <property type="entry name" value="2-oxo-3-deoxygalactonate kinase"/>
    <property type="match status" value="1"/>
</dbReference>
<dbReference type="Gene3D" id="3.30.420.310">
    <property type="entry name" value="2-keto-3-deoxy-galactonokinase, C-terminal domain"/>
    <property type="match status" value="1"/>
</dbReference>
<dbReference type="Gene3D" id="3.30.420.300">
    <property type="entry name" value="2-keto-3-deoxy-galactonokinase, substrate binding domain"/>
    <property type="match status" value="1"/>
</dbReference>
<dbReference type="InterPro" id="IPR007729">
    <property type="entry name" value="DGOK"/>
</dbReference>
<dbReference type="InterPro" id="IPR042257">
    <property type="entry name" value="DGOK_C"/>
</dbReference>
<dbReference type="InterPro" id="IPR042258">
    <property type="entry name" value="DGOK_N"/>
</dbReference>
<dbReference type="Pfam" id="PF05035">
    <property type="entry name" value="DGOK"/>
    <property type="match status" value="1"/>
</dbReference>
<accession>P31459</accession>
<accession>Q2M806</accession>
<sequence>MTARYIAIDWGSTNLRAWLYQGDHCLESRQSEAGVTRLNGKSPAAVLAEVTTDWREEKTPVVMAGMVGSNVGWKVAPYLSVPACFSSIGEQLTSVGDNIWIIPGLCVSHDDNHNVMRGEETQLIGARALAPSSLYVMPGTHCKWVQADSQQINDFRTVMTGELHHLLLNHSLIGAGLPPQENSADAFTAGLERGLNTPAILPQLFEVRASHVLGTLPREQVSEFLSGLLIGAEVASMRDYVAHQHAITLVAGTSLTARYQQAFQAMGCDVTAVAGDTAFQAGIRSIAHAVAN</sequence>
<proteinExistence type="evidence at transcript level"/>
<keyword id="KW-0067">ATP-binding</keyword>
<keyword id="KW-0418">Kinase</keyword>
<keyword id="KW-0547">Nucleotide-binding</keyword>
<keyword id="KW-1185">Reference proteome</keyword>
<keyword id="KW-0808">Transferase</keyword>
<organism>
    <name type="scientific">Escherichia coli (strain K12)</name>
    <dbReference type="NCBI Taxonomy" id="83333"/>
    <lineage>
        <taxon>Bacteria</taxon>
        <taxon>Pseudomonadati</taxon>
        <taxon>Pseudomonadota</taxon>
        <taxon>Gammaproteobacteria</taxon>
        <taxon>Enterobacterales</taxon>
        <taxon>Enterobacteriaceae</taxon>
        <taxon>Escherichia</taxon>
    </lineage>
</organism>
<comment type="catalytic activity">
    <reaction>
        <text>2-dehydro-3-deoxy-D-galactonate + ATP = 2-dehydro-3-deoxy-6-phospho-D-galactonate + ADP + H(+)</text>
        <dbReference type="Rhea" id="RHEA:16525"/>
        <dbReference type="ChEBI" id="CHEBI:15378"/>
        <dbReference type="ChEBI" id="CHEBI:30616"/>
        <dbReference type="ChEBI" id="CHEBI:57989"/>
        <dbReference type="ChEBI" id="CHEBI:58298"/>
        <dbReference type="ChEBI" id="CHEBI:456216"/>
        <dbReference type="EC" id="2.7.1.58"/>
    </reaction>
</comment>
<comment type="pathway">
    <text>Carbohydrate acid metabolism; D-galactonate degradation; D-glyceraldehyde 3-phosphate and pyruvate from D-galactonate: step 2/3.</text>
</comment>
<comment type="induction">
    <text evidence="1">Part of the dgoRKADT operon, which encodes proteins for the metabolism of D-galactonate (PubMed:30455279). Negatively regulated by DgoR (PubMed:30455279). Expression is induced in the presence of D-galactonate (PubMed:30455279).</text>
</comment>
<comment type="disruption phenotype">
    <text evidence="1">Deletion mutant cannot grow on D-galactonate.</text>
</comment>
<comment type="similarity">
    <text evidence="2">Belongs to the DgoK family.</text>
</comment>
<reference key="1">
    <citation type="journal article" date="1993" name="Genomics">
        <title>DNA sequence and analysis of 136 kilobases of the Escherichia coli genome: organizational symmetry around the origin of replication.</title>
        <authorList>
            <person name="Burland V.D."/>
            <person name="Plunkett G. III"/>
            <person name="Daniels D.L."/>
            <person name="Blattner F.R."/>
        </authorList>
    </citation>
    <scope>NUCLEOTIDE SEQUENCE [LARGE SCALE GENOMIC DNA]</scope>
    <source>
        <strain>K12 / MG1655 / ATCC 47076</strain>
    </source>
</reference>
<reference key="2">
    <citation type="journal article" date="1997" name="Science">
        <title>The complete genome sequence of Escherichia coli K-12.</title>
        <authorList>
            <person name="Blattner F.R."/>
            <person name="Plunkett G. III"/>
            <person name="Bloch C.A."/>
            <person name="Perna N.T."/>
            <person name="Burland V."/>
            <person name="Riley M."/>
            <person name="Collado-Vides J."/>
            <person name="Glasner J.D."/>
            <person name="Rode C.K."/>
            <person name="Mayhew G.F."/>
            <person name="Gregor J."/>
            <person name="Davis N.W."/>
            <person name="Kirkpatrick H.A."/>
            <person name="Goeden M.A."/>
            <person name="Rose D.J."/>
            <person name="Mau B."/>
            <person name="Shao Y."/>
        </authorList>
    </citation>
    <scope>NUCLEOTIDE SEQUENCE [LARGE SCALE GENOMIC DNA]</scope>
    <source>
        <strain>K12 / MG1655 / ATCC 47076</strain>
    </source>
</reference>
<reference key="3">
    <citation type="journal article" date="2006" name="Mol. Syst. Biol.">
        <title>Highly accurate genome sequences of Escherichia coli K-12 strains MG1655 and W3110.</title>
        <authorList>
            <person name="Hayashi K."/>
            <person name="Morooka N."/>
            <person name="Yamamoto Y."/>
            <person name="Fujita K."/>
            <person name="Isono K."/>
            <person name="Choi S."/>
            <person name="Ohtsubo E."/>
            <person name="Baba T."/>
            <person name="Wanner B.L."/>
            <person name="Mori H."/>
            <person name="Horiuchi T."/>
        </authorList>
    </citation>
    <scope>NUCLEOTIDE SEQUENCE [LARGE SCALE GENOMIC DNA]</scope>
    <source>
        <strain>K12 / W3110 / ATCC 27325 / DSM 5911</strain>
    </source>
</reference>
<reference key="4">
    <citation type="journal article" date="2019" name="J. Bacteriol.">
        <title>Molecular and functional insights into the regulation of D-galactonate metabolism by the transcriptional regulator DgoR in Escherichia coli.</title>
        <authorList>
            <person name="Singh B."/>
            <person name="Arya G."/>
            <person name="Kundu N."/>
            <person name="Sangwan A."/>
            <person name="Nongthombam S."/>
            <person name="Chaba R."/>
        </authorList>
    </citation>
    <scope>INDUCTION</scope>
    <scope>OPERON</scope>
    <scope>DISRUPTION PHENOTYPE</scope>
</reference>
<gene>
    <name type="primary">dgoK</name>
    <name type="synonym">yidV</name>
    <name type="ordered locus">b3693</name>
    <name type="ordered locus">JW3670</name>
</gene>
<name>DGOK_ECOLI</name>